<proteinExistence type="predicted"/>
<comment type="subcellular location">
    <subcellularLocation>
        <location>Spore wall</location>
    </subcellularLocation>
    <text>Outer layer of the coat matrix and interspore matrix.</text>
</comment>
<comment type="PTM">
    <text>Glycosylated; may contain fucose and GlcNAc-alpha-1-P-Ser.</text>
</comment>
<protein>
    <recommendedName>
        <fullName>Spore coat protein SP96</fullName>
    </recommendedName>
</protein>
<name>SP96_DICDI</name>
<accession>P14328</accession>
<accession>Q550K7</accession>
<accession>Q86B01</accession>
<dbReference type="EMBL" id="X16491">
    <property type="protein sequence ID" value="CAA34508.1"/>
    <property type="molecule type" value="Genomic_DNA"/>
</dbReference>
<dbReference type="EMBL" id="AAFI02000019">
    <property type="protein sequence ID" value="EAL68972.1"/>
    <property type="molecule type" value="Genomic_DNA"/>
</dbReference>
<dbReference type="PIR" id="S07638">
    <property type="entry name" value="S07638"/>
</dbReference>
<dbReference type="RefSeq" id="XP_642925.1">
    <property type="nucleotide sequence ID" value="XM_637833.1"/>
</dbReference>
<dbReference type="FunCoup" id="P14328">
    <property type="interactions" value="653"/>
</dbReference>
<dbReference type="STRING" id="44689.P14328"/>
<dbReference type="GlyConnect" id="578">
    <property type="glycosylation" value="1 O-Fuc glycan, 1 O-Linked glycan"/>
</dbReference>
<dbReference type="GlyCosmos" id="P14328">
    <property type="glycosylation" value="No site information, 3 glycans"/>
</dbReference>
<dbReference type="PaxDb" id="44689-DDB0185032"/>
<dbReference type="EnsemblProtists" id="EAL68972">
    <property type="protein sequence ID" value="EAL68972"/>
    <property type="gene ID" value="DDB_G0276941"/>
</dbReference>
<dbReference type="GeneID" id="8620794"/>
<dbReference type="KEGG" id="ddi:DDB_G0276941"/>
<dbReference type="dictyBase" id="DDB_G0276941">
    <property type="gene designation" value="cotA"/>
</dbReference>
<dbReference type="VEuPathDB" id="AmoebaDB:DDB_G0276941"/>
<dbReference type="eggNOG" id="ENOG502R8E8">
    <property type="taxonomic scope" value="Eukaryota"/>
</dbReference>
<dbReference type="HOGENOM" id="CLU_455242_0_0_1"/>
<dbReference type="InParanoid" id="P14328"/>
<dbReference type="OMA" id="ESRCIEY"/>
<dbReference type="PhylomeDB" id="P14328"/>
<dbReference type="PRO" id="PR:P14328"/>
<dbReference type="Proteomes" id="UP000002195">
    <property type="component" value="Chromosome 2"/>
</dbReference>
<dbReference type="GO" id="GO:0010494">
    <property type="term" value="C:cytoplasmic stress granule"/>
    <property type="evidence" value="ECO:0000318"/>
    <property type="project" value="GO_Central"/>
</dbReference>
<dbReference type="GO" id="GO:0090665">
    <property type="term" value="C:glycoprotein complex"/>
    <property type="evidence" value="ECO:0000314"/>
    <property type="project" value="dictyBase"/>
</dbReference>
<dbReference type="GO" id="GO:0031160">
    <property type="term" value="C:spore wall"/>
    <property type="evidence" value="ECO:0000314"/>
    <property type="project" value="dictyBase"/>
</dbReference>
<dbReference type="GO" id="GO:0003677">
    <property type="term" value="F:DNA binding"/>
    <property type="evidence" value="ECO:0000250"/>
    <property type="project" value="dictyBase"/>
</dbReference>
<dbReference type="GO" id="GO:0003729">
    <property type="term" value="F:mRNA binding"/>
    <property type="evidence" value="ECO:0000318"/>
    <property type="project" value="GO_Central"/>
</dbReference>
<dbReference type="GO" id="GO:0042244">
    <property type="term" value="P:spore wall assembly"/>
    <property type="evidence" value="ECO:0000315"/>
    <property type="project" value="dictyBase"/>
</dbReference>
<dbReference type="GO" id="GO:0030435">
    <property type="term" value="P:sporulation resulting in formation of a cellular spore"/>
    <property type="evidence" value="ECO:0000315"/>
    <property type="project" value="dictyBase"/>
</dbReference>
<dbReference type="GO" id="GO:0034063">
    <property type="term" value="P:stress granule assembly"/>
    <property type="evidence" value="ECO:0000318"/>
    <property type="project" value="GO_Central"/>
</dbReference>
<dbReference type="InterPro" id="IPR007643">
    <property type="entry name" value="Dict_spore_N"/>
</dbReference>
<dbReference type="InterPro" id="IPR003645">
    <property type="entry name" value="Fol_N"/>
</dbReference>
<dbReference type="Pfam" id="PF04562">
    <property type="entry name" value="Dicty_spore_N"/>
    <property type="match status" value="1"/>
</dbReference>
<dbReference type="SMART" id="SM00274">
    <property type="entry name" value="FOLN"/>
    <property type="match status" value="6"/>
</dbReference>
<reference key="1">
    <citation type="journal article" date="1989" name="Nucleic Acids Res.">
        <title>Sequence of the Dictyostelium discoideum spore coat gene SP96.</title>
        <authorList>
            <person name="Fosnaugh K."/>
            <person name="Loomis W.F."/>
        </authorList>
    </citation>
    <scope>NUCLEOTIDE SEQUENCE [GENOMIC DNA]</scope>
    <source>
        <strain>AX4</strain>
    </source>
</reference>
<reference key="2">
    <citation type="journal article" date="1990" name="Cell Differ. Dev.">
        <title>Isolation and characterization of spore coat protein (sp96) gene of Dictyostelium discoideum.</title>
        <authorList>
            <person name="Tasaka M."/>
            <person name="Hasegawa M."/>
            <person name="Ozaki T."/>
            <person name="Iwabuchi M."/>
            <person name="Takeuchi I."/>
        </authorList>
    </citation>
    <scope>NUCLEOTIDE SEQUENCE [GENOMIC DNA]</scope>
</reference>
<reference key="3">
    <citation type="journal article" date="2002" name="Nature">
        <title>Sequence and analysis of chromosome 2 of Dictyostelium discoideum.</title>
        <authorList>
            <person name="Gloeckner G."/>
            <person name="Eichinger L."/>
            <person name="Szafranski K."/>
            <person name="Pachebat J.A."/>
            <person name="Bankier A.T."/>
            <person name="Dear P.H."/>
            <person name="Lehmann R."/>
            <person name="Baumgart C."/>
            <person name="Parra G."/>
            <person name="Abril J.F."/>
            <person name="Guigo R."/>
            <person name="Kumpf K."/>
            <person name="Tunggal B."/>
            <person name="Cox E.C."/>
            <person name="Quail M.A."/>
            <person name="Platzer M."/>
            <person name="Rosenthal A."/>
            <person name="Noegel A.A."/>
        </authorList>
    </citation>
    <scope>NUCLEOTIDE SEQUENCE [LARGE SCALE GENOMIC DNA]</scope>
    <source>
        <strain>AX4</strain>
    </source>
</reference>
<reference key="4">
    <citation type="journal article" date="2005" name="Nature">
        <title>The genome of the social amoeba Dictyostelium discoideum.</title>
        <authorList>
            <person name="Eichinger L."/>
            <person name="Pachebat J.A."/>
            <person name="Gloeckner G."/>
            <person name="Rajandream M.A."/>
            <person name="Sucgang R."/>
            <person name="Berriman M."/>
            <person name="Song J."/>
            <person name="Olsen R."/>
            <person name="Szafranski K."/>
            <person name="Xu Q."/>
            <person name="Tunggal B."/>
            <person name="Kummerfeld S."/>
            <person name="Madera M."/>
            <person name="Konfortov B.A."/>
            <person name="Rivero F."/>
            <person name="Bankier A.T."/>
            <person name="Lehmann R."/>
            <person name="Hamlin N."/>
            <person name="Davies R."/>
            <person name="Gaudet P."/>
            <person name="Fey P."/>
            <person name="Pilcher K."/>
            <person name="Chen G."/>
            <person name="Saunders D."/>
            <person name="Sodergren E.J."/>
            <person name="Davis P."/>
            <person name="Kerhornou A."/>
            <person name="Nie X."/>
            <person name="Hall N."/>
            <person name="Anjard C."/>
            <person name="Hemphill L."/>
            <person name="Bason N."/>
            <person name="Farbrother P."/>
            <person name="Desany B."/>
            <person name="Just E."/>
            <person name="Morio T."/>
            <person name="Rost R."/>
            <person name="Churcher C.M."/>
            <person name="Cooper J."/>
            <person name="Haydock S."/>
            <person name="van Driessche N."/>
            <person name="Cronin A."/>
            <person name="Goodhead I."/>
            <person name="Muzny D.M."/>
            <person name="Mourier T."/>
            <person name="Pain A."/>
            <person name="Lu M."/>
            <person name="Harper D."/>
            <person name="Lindsay R."/>
            <person name="Hauser H."/>
            <person name="James K.D."/>
            <person name="Quiles M."/>
            <person name="Madan Babu M."/>
            <person name="Saito T."/>
            <person name="Buchrieser C."/>
            <person name="Wardroper A."/>
            <person name="Felder M."/>
            <person name="Thangavelu M."/>
            <person name="Johnson D."/>
            <person name="Knights A."/>
            <person name="Loulseged H."/>
            <person name="Mungall K.L."/>
            <person name="Oliver K."/>
            <person name="Price C."/>
            <person name="Quail M.A."/>
            <person name="Urushihara H."/>
            <person name="Hernandez J."/>
            <person name="Rabbinowitsch E."/>
            <person name="Steffen D."/>
            <person name="Sanders M."/>
            <person name="Ma J."/>
            <person name="Kohara Y."/>
            <person name="Sharp S."/>
            <person name="Simmonds M.N."/>
            <person name="Spiegler S."/>
            <person name="Tivey A."/>
            <person name="Sugano S."/>
            <person name="White B."/>
            <person name="Walker D."/>
            <person name="Woodward J.R."/>
            <person name="Winckler T."/>
            <person name="Tanaka Y."/>
            <person name="Shaulsky G."/>
            <person name="Schleicher M."/>
            <person name="Weinstock G.M."/>
            <person name="Rosenthal A."/>
            <person name="Cox E.C."/>
            <person name="Chisholm R.L."/>
            <person name="Gibbs R.A."/>
            <person name="Loomis W.F."/>
            <person name="Platzer M."/>
            <person name="Kay R.R."/>
            <person name="Williams J.G."/>
            <person name="Dear P.H."/>
            <person name="Noegel A.A."/>
            <person name="Barrell B.G."/>
            <person name="Kuspa A."/>
        </authorList>
    </citation>
    <scope>NUCLEOTIDE SEQUENCE [LARGE SCALE GENOMIC DNA]</scope>
    <source>
        <strain>AX4</strain>
    </source>
</reference>
<gene>
    <name type="primary">cotA</name>
    <name type="ORF">DDB_G0276941</name>
</gene>
<evidence type="ECO:0000256" key="1">
    <source>
        <dbReference type="SAM" id="MobiDB-lite"/>
    </source>
</evidence>
<evidence type="ECO:0000305" key="2"/>
<sequence>MRVLLVLVACLTYFSGGALAQSCSSYSGDNCPSTCFQGSYDIPCGAQVKYCTEMKDNCGEGGDVKCWKDGSNLPVQTWSSCVPSELFGPNGKFKPSEIPNSSNCPTNCENGVEWVNLCGLSCDAKTACCPDVCQCKGGQTSGGSTTGSQTSGGSTSGGSTTGSQTSGGSTTGSQTSGSQTSGGSCSNTQCPNGFYCQVQGNNAVCVPQQSSTSGGHQNDPCDTVQCPYGYSCESRDGFEAKCTRDEDEPTHRPTHRPKPPHDSDKYLCDNVHCPRGYKCNAKNGVAKCIAGYEIPRVCRNIQCPTGYRCEDHNRNPICVLEERENPDNCLTCNDVNCEASGLVCVMTRARCKVGAAKCCDVQPTCIKPSTIAGSTIASIASTIASTGSTGATSPCSVAQCPTGYVCVAQNNVAVCLPRPTTTTGSTSDSSALGSTSESSASGSSAVSSSASGSSAASSSPSSSAASSSPSSSAASSSPSSSAASSSPSSSASSSSSPSSSASSSSAPSSSASSSSAPSSSASSSSASSSSASSAATTAATTIATTAATTTATTTATTATTTATTTATTTAATIATTTAATTTATTTATTATTTATTTATS</sequence>
<keyword id="KW-0325">Glycoprotein</keyword>
<keyword id="KW-0597">Phosphoprotein</keyword>
<keyword id="KW-1185">Reference proteome</keyword>
<keyword id="KW-0677">Repeat</keyword>
<keyword id="KW-0749">Sporulation</keyword>
<feature type="chain" id="PRO_0000221452" description="Spore coat protein SP96">
    <location>
        <begin position="1"/>
        <end position="600"/>
    </location>
</feature>
<feature type="domain" description="DSCP-N">
    <location>
        <begin position="21"/>
        <end position="140"/>
    </location>
</feature>
<feature type="domain" description="Follistatin-like 1">
    <location>
        <begin position="184"/>
        <end position="206"/>
    </location>
</feature>
<feature type="domain" description="Follistatin-like 2">
    <location>
        <begin position="220"/>
        <end position="243"/>
    </location>
</feature>
<feature type="domain" description="Follistatin-like 3">
    <location>
        <begin position="267"/>
        <end position="289"/>
    </location>
</feature>
<feature type="domain" description="Follistatin-like 4">
    <location>
        <begin position="297"/>
        <end position="319"/>
    </location>
</feature>
<feature type="domain" description="Follistatin-like 5">
    <location>
        <begin position="331"/>
        <end position="359"/>
    </location>
</feature>
<feature type="domain" description="Follistatin-like 6">
    <location>
        <begin position="394"/>
        <end position="416"/>
    </location>
</feature>
<feature type="region of interest" description="Disordered" evidence="1">
    <location>
        <begin position="139"/>
        <end position="178"/>
    </location>
</feature>
<feature type="region of interest" description="Disordered" evidence="1">
    <location>
        <begin position="420"/>
        <end position="530"/>
    </location>
</feature>
<feature type="compositionally biased region" description="Low complexity" evidence="1">
    <location>
        <begin position="161"/>
        <end position="178"/>
    </location>
</feature>
<feature type="sequence conflict" description="In Ref. 2." evidence="2" ref="2">
    <original>S</original>
    <variation>T</variation>
    <location>
        <position position="156"/>
    </location>
</feature>
<feature type="sequence conflict" description="In Ref. 1; CAA34508 and 2." evidence="2" ref="1 2">
    <original>G</original>
    <variation>A</variation>
    <location>
        <position position="182"/>
    </location>
</feature>
<feature type="sequence conflict" description="In Ref. 1; CAA34508." evidence="2" ref="1">
    <original>C</original>
    <variation>S</variation>
    <location>
        <position position="415"/>
    </location>
</feature>
<organism>
    <name type="scientific">Dictyostelium discoideum</name>
    <name type="common">Social amoeba</name>
    <dbReference type="NCBI Taxonomy" id="44689"/>
    <lineage>
        <taxon>Eukaryota</taxon>
        <taxon>Amoebozoa</taxon>
        <taxon>Evosea</taxon>
        <taxon>Eumycetozoa</taxon>
        <taxon>Dictyostelia</taxon>
        <taxon>Dictyosteliales</taxon>
        <taxon>Dictyosteliaceae</taxon>
        <taxon>Dictyostelium</taxon>
    </lineage>
</organism>